<evidence type="ECO:0000255" key="1">
    <source>
        <dbReference type="HAMAP-Rule" id="MF_01326"/>
    </source>
</evidence>
<evidence type="ECO:0000305" key="2"/>
<keyword id="KW-0687">Ribonucleoprotein</keyword>
<keyword id="KW-0689">Ribosomal protein</keyword>
<keyword id="KW-0694">RNA-binding</keyword>
<keyword id="KW-0699">rRNA-binding</keyword>
<reference key="1">
    <citation type="journal article" date="2001" name="Lancet">
        <title>Whole genome sequencing of meticillin-resistant Staphylococcus aureus.</title>
        <authorList>
            <person name="Kuroda M."/>
            <person name="Ohta T."/>
            <person name="Uchiyama I."/>
            <person name="Baba T."/>
            <person name="Yuzawa H."/>
            <person name="Kobayashi I."/>
            <person name="Cui L."/>
            <person name="Oguchi A."/>
            <person name="Aoki K."/>
            <person name="Nagai Y."/>
            <person name="Lian J.-Q."/>
            <person name="Ito T."/>
            <person name="Kanamori M."/>
            <person name="Matsumaru H."/>
            <person name="Maruyama A."/>
            <person name="Murakami H."/>
            <person name="Hosoyama A."/>
            <person name="Mizutani-Ui Y."/>
            <person name="Takahashi N.K."/>
            <person name="Sawano T."/>
            <person name="Inoue R."/>
            <person name="Kaito C."/>
            <person name="Sekimizu K."/>
            <person name="Hirakawa H."/>
            <person name="Kuhara S."/>
            <person name="Goto S."/>
            <person name="Yabuzaki J."/>
            <person name="Kanehisa M."/>
            <person name="Yamashita A."/>
            <person name="Oshima K."/>
            <person name="Furuya K."/>
            <person name="Yoshino C."/>
            <person name="Shiba T."/>
            <person name="Hattori M."/>
            <person name="Ogasawara N."/>
            <person name="Hayashi H."/>
            <person name="Hiramatsu K."/>
        </authorList>
    </citation>
    <scope>NUCLEOTIDE SEQUENCE [LARGE SCALE GENOMIC DNA]</scope>
    <source>
        <strain>N315</strain>
    </source>
</reference>
<reference key="2">
    <citation type="submission" date="2007-10" db="UniProtKB">
        <title>Shotgun proteomic analysis of total and membrane protein extracts of S. aureus strain N315.</title>
        <authorList>
            <person name="Vaezzadeh A.R."/>
            <person name="Deshusses J."/>
            <person name="Lescuyer P."/>
            <person name="Hochstrasser D.F."/>
        </authorList>
    </citation>
    <scope>IDENTIFICATION BY MASS SPECTROMETRY [LARGE SCALE ANALYSIS]</scope>
    <source>
        <strain>N315</strain>
    </source>
</reference>
<protein>
    <recommendedName>
        <fullName evidence="1">Large ribosomal subunit protein uL24</fullName>
    </recommendedName>
    <alternativeName>
        <fullName evidence="2">50S ribosomal protein L24</fullName>
    </alternativeName>
</protein>
<name>RL24_STAAN</name>
<sequence>MHIKKGDNVKVIAGKDKGKEGKVIATLPKKDRVVVEGVNIMKKHQKPTQLNPEGGILETEAAIHVSNVQLLDPKTNEPTRVGYKFVDGKKVRIAKKSGEEIKSNN</sequence>
<organism>
    <name type="scientific">Staphylococcus aureus (strain N315)</name>
    <dbReference type="NCBI Taxonomy" id="158879"/>
    <lineage>
        <taxon>Bacteria</taxon>
        <taxon>Bacillati</taxon>
        <taxon>Bacillota</taxon>
        <taxon>Bacilli</taxon>
        <taxon>Bacillales</taxon>
        <taxon>Staphylococcaceae</taxon>
        <taxon>Staphylococcus</taxon>
    </lineage>
</organism>
<feature type="chain" id="PRO_0000130716" description="Large ribosomal subunit protein uL24">
    <location>
        <begin position="1"/>
        <end position="105"/>
    </location>
</feature>
<comment type="function">
    <text evidence="1">One of two assembly initiator proteins, it binds directly to the 5'-end of the 23S rRNA, where it nucleates assembly of the 50S subunit.</text>
</comment>
<comment type="function">
    <text evidence="1">One of the proteins that surrounds the polypeptide exit tunnel on the outside of the subunit.</text>
</comment>
<comment type="subunit">
    <text evidence="1">Part of the 50S ribosomal subunit.</text>
</comment>
<comment type="similarity">
    <text evidence="1">Belongs to the universal ribosomal protein uL24 family.</text>
</comment>
<proteinExistence type="evidence at protein level"/>
<gene>
    <name evidence="1" type="primary">rplX</name>
    <name type="ordered locus">SA2036</name>
</gene>
<dbReference type="EMBL" id="BA000018">
    <property type="protein sequence ID" value="BAB43331.1"/>
    <property type="molecule type" value="Genomic_DNA"/>
</dbReference>
<dbReference type="PIR" id="B90021">
    <property type="entry name" value="B90021"/>
</dbReference>
<dbReference type="RefSeq" id="WP_000547687.1">
    <property type="nucleotide sequence ID" value="NC_002745.2"/>
</dbReference>
<dbReference type="EMDB" id="EMD-12333"/>
<dbReference type="SMR" id="P60735"/>
<dbReference type="EnsemblBacteria" id="BAB43331">
    <property type="protein sequence ID" value="BAB43331"/>
    <property type="gene ID" value="BAB43331"/>
</dbReference>
<dbReference type="KEGG" id="sau:SA2036"/>
<dbReference type="HOGENOM" id="CLU_093315_2_0_9"/>
<dbReference type="GO" id="GO:1990904">
    <property type="term" value="C:ribonucleoprotein complex"/>
    <property type="evidence" value="ECO:0007669"/>
    <property type="project" value="UniProtKB-KW"/>
</dbReference>
<dbReference type="GO" id="GO:0005840">
    <property type="term" value="C:ribosome"/>
    <property type="evidence" value="ECO:0007669"/>
    <property type="project" value="UniProtKB-KW"/>
</dbReference>
<dbReference type="GO" id="GO:0019843">
    <property type="term" value="F:rRNA binding"/>
    <property type="evidence" value="ECO:0007669"/>
    <property type="project" value="UniProtKB-UniRule"/>
</dbReference>
<dbReference type="GO" id="GO:0003735">
    <property type="term" value="F:structural constituent of ribosome"/>
    <property type="evidence" value="ECO:0007669"/>
    <property type="project" value="InterPro"/>
</dbReference>
<dbReference type="GO" id="GO:0006412">
    <property type="term" value="P:translation"/>
    <property type="evidence" value="ECO:0007669"/>
    <property type="project" value="UniProtKB-UniRule"/>
</dbReference>
<dbReference type="CDD" id="cd06089">
    <property type="entry name" value="KOW_RPL26"/>
    <property type="match status" value="1"/>
</dbReference>
<dbReference type="FunFam" id="2.30.30.30:FF:000004">
    <property type="entry name" value="50S ribosomal protein L24"/>
    <property type="match status" value="1"/>
</dbReference>
<dbReference type="Gene3D" id="2.30.30.30">
    <property type="match status" value="1"/>
</dbReference>
<dbReference type="HAMAP" id="MF_01326_B">
    <property type="entry name" value="Ribosomal_uL24_B"/>
    <property type="match status" value="1"/>
</dbReference>
<dbReference type="InterPro" id="IPR005824">
    <property type="entry name" value="KOW"/>
</dbReference>
<dbReference type="InterPro" id="IPR014722">
    <property type="entry name" value="Rib_uL2_dom2"/>
</dbReference>
<dbReference type="InterPro" id="IPR003256">
    <property type="entry name" value="Ribosomal_uL24"/>
</dbReference>
<dbReference type="InterPro" id="IPR005825">
    <property type="entry name" value="Ribosomal_uL24_CS"/>
</dbReference>
<dbReference type="InterPro" id="IPR041988">
    <property type="entry name" value="Ribosomal_uL24_KOW"/>
</dbReference>
<dbReference type="InterPro" id="IPR008991">
    <property type="entry name" value="Translation_prot_SH3-like_sf"/>
</dbReference>
<dbReference type="NCBIfam" id="TIGR01079">
    <property type="entry name" value="rplX_bact"/>
    <property type="match status" value="1"/>
</dbReference>
<dbReference type="PANTHER" id="PTHR12903">
    <property type="entry name" value="MITOCHONDRIAL RIBOSOMAL PROTEIN L24"/>
    <property type="match status" value="1"/>
</dbReference>
<dbReference type="Pfam" id="PF00467">
    <property type="entry name" value="KOW"/>
    <property type="match status" value="1"/>
</dbReference>
<dbReference type="Pfam" id="PF17136">
    <property type="entry name" value="ribosomal_L24"/>
    <property type="match status" value="1"/>
</dbReference>
<dbReference type="SMART" id="SM00739">
    <property type="entry name" value="KOW"/>
    <property type="match status" value="1"/>
</dbReference>
<dbReference type="SUPFAM" id="SSF50104">
    <property type="entry name" value="Translation proteins SH3-like domain"/>
    <property type="match status" value="1"/>
</dbReference>
<dbReference type="PROSITE" id="PS01108">
    <property type="entry name" value="RIBOSOMAL_L24"/>
    <property type="match status" value="1"/>
</dbReference>
<accession>P60735</accession>
<accession>Q99S32</accession>